<sequence>MGCATTSVKIASIVLNAVLGFLAAGAIGWIAYNADTETEEFVIAAYIACSLILVFALLGIFAAIRESVVLTATSAVFLLILAILQIVSTCLFLHEFDVKSGRDMVEVAWQANNMDSLQQKHECCGQSSAQDYIHLSLLIPPSCYADLQQTPDHLYLDGCIEKVQSFYESDKLRFIIVSWVLVAFELICFALAVFLAISFKNKQRRMEF</sequence>
<dbReference type="EMBL" id="U49081">
    <property type="protein sequence ID" value="AAA98512.1"/>
    <property type="molecule type" value="mRNA"/>
</dbReference>
<dbReference type="EMBL" id="AE013599">
    <property type="protein sequence ID" value="AAF59302.1"/>
    <property type="molecule type" value="Genomic_DNA"/>
</dbReference>
<dbReference type="EMBL" id="AY071541">
    <property type="protein sequence ID" value="AAL49163.1"/>
    <property type="molecule type" value="mRNA"/>
</dbReference>
<dbReference type="RefSeq" id="NP_001260757.1">
    <property type="nucleotide sequence ID" value="NM_001273828.1"/>
</dbReference>
<dbReference type="RefSeq" id="NP_523639.1">
    <property type="nucleotide sequence ID" value="NM_078915.3"/>
</dbReference>
<dbReference type="SMR" id="Q24188"/>
<dbReference type="BioGRID" id="61512">
    <property type="interactions" value="2"/>
</dbReference>
<dbReference type="IntAct" id="Q24188">
    <property type="interactions" value="1"/>
</dbReference>
<dbReference type="STRING" id="7227.FBpp0088104"/>
<dbReference type="TCDB" id="8.A.40.1.4">
    <property type="family name" value="the tetraspanin (tetraspanin) family"/>
</dbReference>
<dbReference type="PaxDb" id="7227-FBpp0088104"/>
<dbReference type="DNASU" id="35623"/>
<dbReference type="EnsemblMetazoa" id="FBtr0089033">
    <property type="protein sequence ID" value="FBpp0088104"/>
    <property type="gene ID" value="FBgn0016032"/>
</dbReference>
<dbReference type="EnsemblMetazoa" id="FBtr0336873">
    <property type="protein sequence ID" value="FBpp0307822"/>
    <property type="gene ID" value="FBgn0016032"/>
</dbReference>
<dbReference type="GeneID" id="35623"/>
<dbReference type="KEGG" id="dme:Dmel_CG2374"/>
<dbReference type="AGR" id="FB:FBgn0016032"/>
<dbReference type="CTD" id="35623"/>
<dbReference type="FlyBase" id="FBgn0016032">
    <property type="gene designation" value="lbm"/>
</dbReference>
<dbReference type="VEuPathDB" id="VectorBase:FBgn0016032"/>
<dbReference type="eggNOG" id="KOG3882">
    <property type="taxonomic scope" value="Eukaryota"/>
</dbReference>
<dbReference type="GeneTree" id="ENSGT00940000166294"/>
<dbReference type="HOGENOM" id="CLU_055524_6_4_1"/>
<dbReference type="InParanoid" id="Q24188"/>
<dbReference type="OMA" id="FELICCA"/>
<dbReference type="OrthoDB" id="6361633at2759"/>
<dbReference type="PhylomeDB" id="Q24188"/>
<dbReference type="Reactome" id="R-DME-6798695">
    <property type="pathway name" value="Neutrophil degranulation"/>
</dbReference>
<dbReference type="BioGRID-ORCS" id="35623">
    <property type="hits" value="0 hits in 1 CRISPR screen"/>
</dbReference>
<dbReference type="GenomeRNAi" id="35623"/>
<dbReference type="PRO" id="PR:Q24188"/>
<dbReference type="Proteomes" id="UP000000803">
    <property type="component" value="Chromosome 2R"/>
</dbReference>
<dbReference type="Bgee" id="FBgn0016032">
    <property type="expression patterns" value="Expressed in adult enteroendocrine precursor cell in adult midgut (Drosophila) and 110 other cell types or tissues"/>
</dbReference>
<dbReference type="ExpressionAtlas" id="Q24188">
    <property type="expression patterns" value="baseline and differential"/>
</dbReference>
<dbReference type="GO" id="GO:0005576">
    <property type="term" value="C:extracellular region"/>
    <property type="evidence" value="ECO:0000314"/>
    <property type="project" value="FlyBase"/>
</dbReference>
<dbReference type="GO" id="GO:0016020">
    <property type="term" value="C:membrane"/>
    <property type="evidence" value="ECO:0000250"/>
    <property type="project" value="FlyBase"/>
</dbReference>
<dbReference type="GO" id="GO:0005886">
    <property type="term" value="C:plasma membrane"/>
    <property type="evidence" value="ECO:0000318"/>
    <property type="project" value="GO_Central"/>
</dbReference>
<dbReference type="GO" id="GO:0045202">
    <property type="term" value="C:synapse"/>
    <property type="evidence" value="ECO:0007669"/>
    <property type="project" value="UniProtKB-SubCell"/>
</dbReference>
<dbReference type="GO" id="GO:0007416">
    <property type="term" value="P:synapse assembly"/>
    <property type="evidence" value="ECO:0000315"/>
    <property type="project" value="FlyBase"/>
</dbReference>
<dbReference type="CDD" id="cd03127">
    <property type="entry name" value="tetraspanin_LEL"/>
    <property type="match status" value="1"/>
</dbReference>
<dbReference type="Gene3D" id="1.10.1450.10">
    <property type="entry name" value="Tetraspanin"/>
    <property type="match status" value="1"/>
</dbReference>
<dbReference type="InterPro" id="IPR018499">
    <property type="entry name" value="Tetraspanin/Peripherin"/>
</dbReference>
<dbReference type="InterPro" id="IPR008952">
    <property type="entry name" value="Tetraspanin_EC2_sf"/>
</dbReference>
<dbReference type="PANTHER" id="PTHR19282:SF521">
    <property type="entry name" value="IP01817P-RELATED"/>
    <property type="match status" value="1"/>
</dbReference>
<dbReference type="PANTHER" id="PTHR19282">
    <property type="entry name" value="TETRASPANIN"/>
    <property type="match status" value="1"/>
</dbReference>
<dbReference type="Pfam" id="PF00335">
    <property type="entry name" value="Tetraspanin"/>
    <property type="match status" value="1"/>
</dbReference>
<dbReference type="SUPFAM" id="SSF48652">
    <property type="entry name" value="Tetraspanin"/>
    <property type="match status" value="1"/>
</dbReference>
<name>LBM_DROME</name>
<evidence type="ECO:0000255" key="1"/>
<evidence type="ECO:0000269" key="2">
    <source>
    </source>
</evidence>
<evidence type="ECO:0000305" key="3"/>
<organism>
    <name type="scientific">Drosophila melanogaster</name>
    <name type="common">Fruit fly</name>
    <dbReference type="NCBI Taxonomy" id="7227"/>
    <lineage>
        <taxon>Eukaryota</taxon>
        <taxon>Metazoa</taxon>
        <taxon>Ecdysozoa</taxon>
        <taxon>Arthropoda</taxon>
        <taxon>Hexapoda</taxon>
        <taxon>Insecta</taxon>
        <taxon>Pterygota</taxon>
        <taxon>Neoptera</taxon>
        <taxon>Endopterygota</taxon>
        <taxon>Diptera</taxon>
        <taxon>Brachycera</taxon>
        <taxon>Muscomorpha</taxon>
        <taxon>Ephydroidea</taxon>
        <taxon>Drosophilidae</taxon>
        <taxon>Drosophila</taxon>
        <taxon>Sophophora</taxon>
    </lineage>
</organism>
<proteinExistence type="evidence at transcript level"/>
<feature type="chain" id="PRO_0000219284" description="Protein late bloomer">
    <location>
        <begin position="1"/>
        <end position="208"/>
    </location>
</feature>
<feature type="transmembrane region" description="Helical" evidence="1">
    <location>
        <begin position="10"/>
        <end position="30"/>
    </location>
</feature>
<feature type="transmembrane region" description="Helical" evidence="1">
    <location>
        <begin position="41"/>
        <end position="61"/>
    </location>
</feature>
<feature type="transmembrane region" description="Helical" evidence="1">
    <location>
        <begin position="67"/>
        <end position="87"/>
    </location>
</feature>
<feature type="transmembrane region" description="Helical" evidence="1">
    <location>
        <begin position="174"/>
        <end position="194"/>
    </location>
</feature>
<gene>
    <name type="primary">lbm</name>
    <name type="synonym">lbl</name>
    <name type="ORF">CG2374</name>
</gene>
<protein>
    <recommendedName>
        <fullName>Protein late bloomer</fullName>
    </recommendedName>
</protein>
<keyword id="KW-0472">Membrane</keyword>
<keyword id="KW-1185">Reference proteome</keyword>
<keyword id="KW-0770">Synapse</keyword>
<keyword id="KW-0812">Transmembrane</keyword>
<keyword id="KW-1133">Transmembrane helix</keyword>
<accession>Q24188</accession>
<accession>Q9V4H0</accession>
<reference key="1">
    <citation type="journal article" date="1996" name="Science">
        <title>A neural tetraspanin, encoded by late bloomer, that facilitates synapse formation.</title>
        <authorList>
            <person name="Kopczynski C.C."/>
            <person name="Davis G.W."/>
            <person name="Goodman C.S."/>
        </authorList>
    </citation>
    <scope>NUCLEOTIDE SEQUENCE [MRNA]</scope>
    <scope>FUNCTION</scope>
    <scope>TISSUE SPECIFICITY</scope>
</reference>
<reference key="2">
    <citation type="journal article" date="2000" name="Science">
        <title>The genome sequence of Drosophila melanogaster.</title>
        <authorList>
            <person name="Adams M.D."/>
            <person name="Celniker S.E."/>
            <person name="Holt R.A."/>
            <person name="Evans C.A."/>
            <person name="Gocayne J.D."/>
            <person name="Amanatides P.G."/>
            <person name="Scherer S.E."/>
            <person name="Li P.W."/>
            <person name="Hoskins R.A."/>
            <person name="Galle R.F."/>
            <person name="George R.A."/>
            <person name="Lewis S.E."/>
            <person name="Richards S."/>
            <person name="Ashburner M."/>
            <person name="Henderson S.N."/>
            <person name="Sutton G.G."/>
            <person name="Wortman J.R."/>
            <person name="Yandell M.D."/>
            <person name="Zhang Q."/>
            <person name="Chen L.X."/>
            <person name="Brandon R.C."/>
            <person name="Rogers Y.-H.C."/>
            <person name="Blazej R.G."/>
            <person name="Champe M."/>
            <person name="Pfeiffer B.D."/>
            <person name="Wan K.H."/>
            <person name="Doyle C."/>
            <person name="Baxter E.G."/>
            <person name="Helt G."/>
            <person name="Nelson C.R."/>
            <person name="Miklos G.L.G."/>
            <person name="Abril J.F."/>
            <person name="Agbayani A."/>
            <person name="An H.-J."/>
            <person name="Andrews-Pfannkoch C."/>
            <person name="Baldwin D."/>
            <person name="Ballew R.M."/>
            <person name="Basu A."/>
            <person name="Baxendale J."/>
            <person name="Bayraktaroglu L."/>
            <person name="Beasley E.M."/>
            <person name="Beeson K.Y."/>
            <person name="Benos P.V."/>
            <person name="Berman B.P."/>
            <person name="Bhandari D."/>
            <person name="Bolshakov S."/>
            <person name="Borkova D."/>
            <person name="Botchan M.R."/>
            <person name="Bouck J."/>
            <person name="Brokstein P."/>
            <person name="Brottier P."/>
            <person name="Burtis K.C."/>
            <person name="Busam D.A."/>
            <person name="Butler H."/>
            <person name="Cadieu E."/>
            <person name="Center A."/>
            <person name="Chandra I."/>
            <person name="Cherry J.M."/>
            <person name="Cawley S."/>
            <person name="Dahlke C."/>
            <person name="Davenport L.B."/>
            <person name="Davies P."/>
            <person name="de Pablos B."/>
            <person name="Delcher A."/>
            <person name="Deng Z."/>
            <person name="Mays A.D."/>
            <person name="Dew I."/>
            <person name="Dietz S.M."/>
            <person name="Dodson K."/>
            <person name="Doup L.E."/>
            <person name="Downes M."/>
            <person name="Dugan-Rocha S."/>
            <person name="Dunkov B.C."/>
            <person name="Dunn P."/>
            <person name="Durbin K.J."/>
            <person name="Evangelista C.C."/>
            <person name="Ferraz C."/>
            <person name="Ferriera S."/>
            <person name="Fleischmann W."/>
            <person name="Fosler C."/>
            <person name="Gabrielian A.E."/>
            <person name="Garg N.S."/>
            <person name="Gelbart W.M."/>
            <person name="Glasser K."/>
            <person name="Glodek A."/>
            <person name="Gong F."/>
            <person name="Gorrell J.H."/>
            <person name="Gu Z."/>
            <person name="Guan P."/>
            <person name="Harris M."/>
            <person name="Harris N.L."/>
            <person name="Harvey D.A."/>
            <person name="Heiman T.J."/>
            <person name="Hernandez J.R."/>
            <person name="Houck J."/>
            <person name="Hostin D."/>
            <person name="Houston K.A."/>
            <person name="Howland T.J."/>
            <person name="Wei M.-H."/>
            <person name="Ibegwam C."/>
            <person name="Jalali M."/>
            <person name="Kalush F."/>
            <person name="Karpen G.H."/>
            <person name="Ke Z."/>
            <person name="Kennison J.A."/>
            <person name="Ketchum K.A."/>
            <person name="Kimmel B.E."/>
            <person name="Kodira C.D."/>
            <person name="Kraft C.L."/>
            <person name="Kravitz S."/>
            <person name="Kulp D."/>
            <person name="Lai Z."/>
            <person name="Lasko P."/>
            <person name="Lei Y."/>
            <person name="Levitsky A.A."/>
            <person name="Li J.H."/>
            <person name="Li Z."/>
            <person name="Liang Y."/>
            <person name="Lin X."/>
            <person name="Liu X."/>
            <person name="Mattei B."/>
            <person name="McIntosh T.C."/>
            <person name="McLeod M.P."/>
            <person name="McPherson D."/>
            <person name="Merkulov G."/>
            <person name="Milshina N.V."/>
            <person name="Mobarry C."/>
            <person name="Morris J."/>
            <person name="Moshrefi A."/>
            <person name="Mount S.M."/>
            <person name="Moy M."/>
            <person name="Murphy B."/>
            <person name="Murphy L."/>
            <person name="Muzny D.M."/>
            <person name="Nelson D.L."/>
            <person name="Nelson D.R."/>
            <person name="Nelson K.A."/>
            <person name="Nixon K."/>
            <person name="Nusskern D.R."/>
            <person name="Pacleb J.M."/>
            <person name="Palazzolo M."/>
            <person name="Pittman G.S."/>
            <person name="Pan S."/>
            <person name="Pollard J."/>
            <person name="Puri V."/>
            <person name="Reese M.G."/>
            <person name="Reinert K."/>
            <person name="Remington K."/>
            <person name="Saunders R.D.C."/>
            <person name="Scheeler F."/>
            <person name="Shen H."/>
            <person name="Shue B.C."/>
            <person name="Siden-Kiamos I."/>
            <person name="Simpson M."/>
            <person name="Skupski M.P."/>
            <person name="Smith T.J."/>
            <person name="Spier E."/>
            <person name="Spradling A.C."/>
            <person name="Stapleton M."/>
            <person name="Strong R."/>
            <person name="Sun E."/>
            <person name="Svirskas R."/>
            <person name="Tector C."/>
            <person name="Turner R."/>
            <person name="Venter E."/>
            <person name="Wang A.H."/>
            <person name="Wang X."/>
            <person name="Wang Z.-Y."/>
            <person name="Wassarman D.A."/>
            <person name="Weinstock G.M."/>
            <person name="Weissenbach J."/>
            <person name="Williams S.M."/>
            <person name="Woodage T."/>
            <person name="Worley K.C."/>
            <person name="Wu D."/>
            <person name="Yang S."/>
            <person name="Yao Q.A."/>
            <person name="Ye J."/>
            <person name="Yeh R.-F."/>
            <person name="Zaveri J.S."/>
            <person name="Zhan M."/>
            <person name="Zhang G."/>
            <person name="Zhao Q."/>
            <person name="Zheng L."/>
            <person name="Zheng X.H."/>
            <person name="Zhong F.N."/>
            <person name="Zhong W."/>
            <person name="Zhou X."/>
            <person name="Zhu S.C."/>
            <person name="Zhu X."/>
            <person name="Smith H.O."/>
            <person name="Gibbs R.A."/>
            <person name="Myers E.W."/>
            <person name="Rubin G.M."/>
            <person name="Venter J.C."/>
        </authorList>
    </citation>
    <scope>NUCLEOTIDE SEQUENCE [LARGE SCALE GENOMIC DNA]</scope>
    <source>
        <strain>Berkeley</strain>
    </source>
</reference>
<reference key="3">
    <citation type="journal article" date="2002" name="Genome Biol.">
        <title>Annotation of the Drosophila melanogaster euchromatic genome: a systematic review.</title>
        <authorList>
            <person name="Misra S."/>
            <person name="Crosby M.A."/>
            <person name="Mungall C.J."/>
            <person name="Matthews B.B."/>
            <person name="Campbell K.S."/>
            <person name="Hradecky P."/>
            <person name="Huang Y."/>
            <person name="Kaminker J.S."/>
            <person name="Millburn G.H."/>
            <person name="Prochnik S.E."/>
            <person name="Smith C.D."/>
            <person name="Tupy J.L."/>
            <person name="Whitfield E.J."/>
            <person name="Bayraktaroglu L."/>
            <person name="Berman B.P."/>
            <person name="Bettencourt B.R."/>
            <person name="Celniker S.E."/>
            <person name="de Grey A.D.N.J."/>
            <person name="Drysdale R.A."/>
            <person name="Harris N.L."/>
            <person name="Richter J."/>
            <person name="Russo S."/>
            <person name="Schroeder A.J."/>
            <person name="Shu S.Q."/>
            <person name="Stapleton M."/>
            <person name="Yamada C."/>
            <person name="Ashburner M."/>
            <person name="Gelbart W.M."/>
            <person name="Rubin G.M."/>
            <person name="Lewis S.E."/>
        </authorList>
    </citation>
    <scope>GENOME REANNOTATION</scope>
    <source>
        <strain>Berkeley</strain>
    </source>
</reference>
<reference key="4">
    <citation type="journal article" date="2002" name="Genome Biol.">
        <title>A Drosophila full-length cDNA resource.</title>
        <authorList>
            <person name="Stapleton M."/>
            <person name="Carlson J.W."/>
            <person name="Brokstein P."/>
            <person name="Yu C."/>
            <person name="Champe M."/>
            <person name="George R.A."/>
            <person name="Guarin H."/>
            <person name="Kronmiller B."/>
            <person name="Pacleb J.M."/>
            <person name="Park S."/>
            <person name="Wan K.H."/>
            <person name="Rubin G.M."/>
            <person name="Celniker S.E."/>
        </authorList>
    </citation>
    <scope>NUCLEOTIDE SEQUENCE [LARGE SCALE MRNA]</scope>
    <source>
        <strain>Berkeley</strain>
        <tissue>Embryo</tissue>
    </source>
</reference>
<comment type="function">
    <text evidence="2">Facilitates synapse formation.</text>
</comment>
<comment type="subcellular location">
    <subcellularLocation>
        <location evidence="3">Membrane</location>
        <topology evidence="3">Multi-pass membrane protein</topology>
    </subcellularLocation>
    <subcellularLocation>
        <location>Synapse</location>
    </subcellularLocation>
</comment>
<comment type="tissue specificity">
    <text evidence="2">Transiently expressed on motor axons, growth cones and terminal arbors.</text>
</comment>
<comment type="similarity">
    <text evidence="3">Belongs to the tetraspanin (TM4SF) family.</text>
</comment>